<sequence>MTKVYYDQSVEKDALQGKKIAIIGYGSQGHAHAQNLKDNGYDVIVGIRPGHSFDKAKEDGFDVYPVAEAVKQADVIMVLLPDEIQGNVYKNEIEPNLEAGNALAFAHGFNIHFEVIKPPKDVDVFLVAPKGPGHLVRRTFVEGTAVPALFGVQQDATGQARDISLSYAKGIGATRAGVIETTFKEETETDLFGEQAVLCGGIHKLIQSGFETLVEAGYQKELAYFEVLHEMKLIVDLMYEGGMENVRYSISNTAEYGDYVSGPRVITPDVKDNMKAVLKDIQNGNFANSFVKDNENGFKEFYKLREQQHGHEIEAVGRELRKMMPFIKSKSIQK</sequence>
<name>ILVC_STAHJ</name>
<organism>
    <name type="scientific">Staphylococcus haemolyticus (strain JCSC1435)</name>
    <dbReference type="NCBI Taxonomy" id="279808"/>
    <lineage>
        <taxon>Bacteria</taxon>
        <taxon>Bacillati</taxon>
        <taxon>Bacillota</taxon>
        <taxon>Bacilli</taxon>
        <taxon>Bacillales</taxon>
        <taxon>Staphylococcaceae</taxon>
        <taxon>Staphylococcus</taxon>
    </lineage>
</organism>
<keyword id="KW-0028">Amino-acid biosynthesis</keyword>
<keyword id="KW-0100">Branched-chain amino acid biosynthesis</keyword>
<keyword id="KW-0460">Magnesium</keyword>
<keyword id="KW-0479">Metal-binding</keyword>
<keyword id="KW-0521">NADP</keyword>
<keyword id="KW-0560">Oxidoreductase</keyword>
<reference key="1">
    <citation type="journal article" date="2005" name="J. Bacteriol.">
        <title>Whole-genome sequencing of Staphylococcus haemolyticus uncovers the extreme plasticity of its genome and the evolution of human-colonizing staphylococcal species.</title>
        <authorList>
            <person name="Takeuchi F."/>
            <person name="Watanabe S."/>
            <person name="Baba T."/>
            <person name="Yuzawa H."/>
            <person name="Ito T."/>
            <person name="Morimoto Y."/>
            <person name="Kuroda M."/>
            <person name="Cui L."/>
            <person name="Takahashi M."/>
            <person name="Ankai A."/>
            <person name="Baba S."/>
            <person name="Fukui S."/>
            <person name="Lee J.C."/>
            <person name="Hiramatsu K."/>
        </authorList>
    </citation>
    <scope>NUCLEOTIDE SEQUENCE [LARGE SCALE GENOMIC DNA]</scope>
    <source>
        <strain>JCSC1435</strain>
    </source>
</reference>
<dbReference type="EC" id="1.1.1.86" evidence="1"/>
<dbReference type="EMBL" id="AP006716">
    <property type="protein sequence ID" value="BAE04286.1"/>
    <property type="molecule type" value="Genomic_DNA"/>
</dbReference>
<dbReference type="RefSeq" id="WP_011275285.1">
    <property type="nucleotide sequence ID" value="NC_007168.1"/>
</dbReference>
<dbReference type="SMR" id="Q4L7T9"/>
<dbReference type="KEGG" id="sha:SH0977"/>
<dbReference type="eggNOG" id="COG0059">
    <property type="taxonomic scope" value="Bacteria"/>
</dbReference>
<dbReference type="HOGENOM" id="CLU_033821_0_1_9"/>
<dbReference type="OrthoDB" id="9804088at2"/>
<dbReference type="UniPathway" id="UPA00047">
    <property type="reaction ID" value="UER00056"/>
</dbReference>
<dbReference type="UniPathway" id="UPA00049">
    <property type="reaction ID" value="UER00060"/>
</dbReference>
<dbReference type="Proteomes" id="UP000000543">
    <property type="component" value="Chromosome"/>
</dbReference>
<dbReference type="GO" id="GO:0005829">
    <property type="term" value="C:cytosol"/>
    <property type="evidence" value="ECO:0007669"/>
    <property type="project" value="TreeGrafter"/>
</dbReference>
<dbReference type="GO" id="GO:0004455">
    <property type="term" value="F:ketol-acid reductoisomerase activity"/>
    <property type="evidence" value="ECO:0007669"/>
    <property type="project" value="UniProtKB-UniRule"/>
</dbReference>
<dbReference type="GO" id="GO:0000287">
    <property type="term" value="F:magnesium ion binding"/>
    <property type="evidence" value="ECO:0007669"/>
    <property type="project" value="UniProtKB-UniRule"/>
</dbReference>
<dbReference type="GO" id="GO:0050661">
    <property type="term" value="F:NADP binding"/>
    <property type="evidence" value="ECO:0007669"/>
    <property type="project" value="InterPro"/>
</dbReference>
<dbReference type="GO" id="GO:0009097">
    <property type="term" value="P:isoleucine biosynthetic process"/>
    <property type="evidence" value="ECO:0007669"/>
    <property type="project" value="UniProtKB-UniRule"/>
</dbReference>
<dbReference type="GO" id="GO:0009099">
    <property type="term" value="P:L-valine biosynthetic process"/>
    <property type="evidence" value="ECO:0007669"/>
    <property type="project" value="UniProtKB-UniRule"/>
</dbReference>
<dbReference type="FunFam" id="3.40.50.720:FF:000023">
    <property type="entry name" value="Ketol-acid reductoisomerase (NADP(+))"/>
    <property type="match status" value="1"/>
</dbReference>
<dbReference type="Gene3D" id="6.10.240.10">
    <property type="match status" value="1"/>
</dbReference>
<dbReference type="Gene3D" id="3.40.50.720">
    <property type="entry name" value="NAD(P)-binding Rossmann-like Domain"/>
    <property type="match status" value="1"/>
</dbReference>
<dbReference type="HAMAP" id="MF_00435">
    <property type="entry name" value="IlvC"/>
    <property type="match status" value="1"/>
</dbReference>
<dbReference type="InterPro" id="IPR008927">
    <property type="entry name" value="6-PGluconate_DH-like_C_sf"/>
</dbReference>
<dbReference type="InterPro" id="IPR013023">
    <property type="entry name" value="KARI"/>
</dbReference>
<dbReference type="InterPro" id="IPR000506">
    <property type="entry name" value="KARI_C"/>
</dbReference>
<dbReference type="InterPro" id="IPR013116">
    <property type="entry name" value="KARI_N"/>
</dbReference>
<dbReference type="InterPro" id="IPR014359">
    <property type="entry name" value="KARI_prok"/>
</dbReference>
<dbReference type="InterPro" id="IPR036291">
    <property type="entry name" value="NAD(P)-bd_dom_sf"/>
</dbReference>
<dbReference type="NCBIfam" id="TIGR00465">
    <property type="entry name" value="ilvC"/>
    <property type="match status" value="1"/>
</dbReference>
<dbReference type="NCBIfam" id="NF004017">
    <property type="entry name" value="PRK05479.1"/>
    <property type="match status" value="1"/>
</dbReference>
<dbReference type="NCBIfam" id="NF009940">
    <property type="entry name" value="PRK13403.1"/>
    <property type="match status" value="1"/>
</dbReference>
<dbReference type="PANTHER" id="PTHR21371">
    <property type="entry name" value="KETOL-ACID REDUCTOISOMERASE, MITOCHONDRIAL"/>
    <property type="match status" value="1"/>
</dbReference>
<dbReference type="PANTHER" id="PTHR21371:SF1">
    <property type="entry name" value="KETOL-ACID REDUCTOISOMERASE, MITOCHONDRIAL"/>
    <property type="match status" value="1"/>
</dbReference>
<dbReference type="Pfam" id="PF01450">
    <property type="entry name" value="KARI_C"/>
    <property type="match status" value="1"/>
</dbReference>
<dbReference type="Pfam" id="PF07991">
    <property type="entry name" value="KARI_N"/>
    <property type="match status" value="1"/>
</dbReference>
<dbReference type="PIRSF" id="PIRSF000116">
    <property type="entry name" value="IlvC_gammaproteo"/>
    <property type="match status" value="1"/>
</dbReference>
<dbReference type="SUPFAM" id="SSF48179">
    <property type="entry name" value="6-phosphogluconate dehydrogenase C-terminal domain-like"/>
    <property type="match status" value="1"/>
</dbReference>
<dbReference type="SUPFAM" id="SSF51735">
    <property type="entry name" value="NAD(P)-binding Rossmann-fold domains"/>
    <property type="match status" value="1"/>
</dbReference>
<dbReference type="PROSITE" id="PS51851">
    <property type="entry name" value="KARI_C"/>
    <property type="match status" value="1"/>
</dbReference>
<dbReference type="PROSITE" id="PS51850">
    <property type="entry name" value="KARI_N"/>
    <property type="match status" value="1"/>
</dbReference>
<proteinExistence type="inferred from homology"/>
<gene>
    <name evidence="1" type="primary">ilvC</name>
    <name type="ordered locus">SH0977</name>
</gene>
<comment type="function">
    <text evidence="1">Involved in the biosynthesis of branched-chain amino acids (BCAA). Catalyzes an alkyl-migration followed by a ketol-acid reduction of (S)-2-acetolactate (S2AL) to yield (R)-2,3-dihydroxy-isovalerate. In the isomerase reaction, S2AL is rearranged via a Mg-dependent methyl migration to produce 3-hydroxy-3-methyl-2-ketobutyrate (HMKB). In the reductase reaction, this 2-ketoacid undergoes a metal-dependent reduction by NADPH to yield (R)-2,3-dihydroxy-isovalerate.</text>
</comment>
<comment type="catalytic activity">
    <reaction evidence="1">
        <text>(2R)-2,3-dihydroxy-3-methylbutanoate + NADP(+) = (2S)-2-acetolactate + NADPH + H(+)</text>
        <dbReference type="Rhea" id="RHEA:22068"/>
        <dbReference type="ChEBI" id="CHEBI:15378"/>
        <dbReference type="ChEBI" id="CHEBI:49072"/>
        <dbReference type="ChEBI" id="CHEBI:57783"/>
        <dbReference type="ChEBI" id="CHEBI:58349"/>
        <dbReference type="ChEBI" id="CHEBI:58476"/>
        <dbReference type="EC" id="1.1.1.86"/>
    </reaction>
</comment>
<comment type="catalytic activity">
    <reaction evidence="1">
        <text>(2R,3R)-2,3-dihydroxy-3-methylpentanoate + NADP(+) = (S)-2-ethyl-2-hydroxy-3-oxobutanoate + NADPH + H(+)</text>
        <dbReference type="Rhea" id="RHEA:13493"/>
        <dbReference type="ChEBI" id="CHEBI:15378"/>
        <dbReference type="ChEBI" id="CHEBI:49256"/>
        <dbReference type="ChEBI" id="CHEBI:49258"/>
        <dbReference type="ChEBI" id="CHEBI:57783"/>
        <dbReference type="ChEBI" id="CHEBI:58349"/>
        <dbReference type="EC" id="1.1.1.86"/>
    </reaction>
</comment>
<comment type="cofactor">
    <cofactor evidence="1">
        <name>Mg(2+)</name>
        <dbReference type="ChEBI" id="CHEBI:18420"/>
    </cofactor>
    <text evidence="1">Binds 2 magnesium ions per subunit.</text>
</comment>
<comment type="pathway">
    <text evidence="1">Amino-acid biosynthesis; L-isoleucine biosynthesis; L-isoleucine from 2-oxobutanoate: step 2/4.</text>
</comment>
<comment type="pathway">
    <text evidence="1">Amino-acid biosynthesis; L-valine biosynthesis; L-valine from pyruvate: step 2/4.</text>
</comment>
<comment type="similarity">
    <text evidence="1">Belongs to the ketol-acid reductoisomerase family.</text>
</comment>
<evidence type="ECO:0000255" key="1">
    <source>
        <dbReference type="HAMAP-Rule" id="MF_00435"/>
    </source>
</evidence>
<evidence type="ECO:0000255" key="2">
    <source>
        <dbReference type="PROSITE-ProRule" id="PRU01197"/>
    </source>
</evidence>
<evidence type="ECO:0000255" key="3">
    <source>
        <dbReference type="PROSITE-ProRule" id="PRU01198"/>
    </source>
</evidence>
<protein>
    <recommendedName>
        <fullName evidence="1">Ketol-acid reductoisomerase (NADP(+))</fullName>
        <shortName evidence="1">KARI</shortName>
        <ecNumber evidence="1">1.1.1.86</ecNumber>
    </recommendedName>
    <alternativeName>
        <fullName evidence="1">Acetohydroxy-acid isomeroreductase</fullName>
        <shortName evidence="1">AHIR</shortName>
    </alternativeName>
    <alternativeName>
        <fullName evidence="1">Alpha-keto-beta-hydroxylacyl reductoisomerase</fullName>
    </alternativeName>
    <alternativeName>
        <fullName evidence="1">Ketol-acid reductoisomerase type 1</fullName>
    </alternativeName>
    <alternativeName>
        <fullName evidence="1">Ketol-acid reductoisomerase type I</fullName>
    </alternativeName>
</protein>
<feature type="chain" id="PRO_0000226203" description="Ketol-acid reductoisomerase (NADP(+))">
    <location>
        <begin position="1"/>
        <end position="334"/>
    </location>
</feature>
<feature type="domain" description="KARI N-terminal Rossmann" evidence="2">
    <location>
        <begin position="2"/>
        <end position="181"/>
    </location>
</feature>
<feature type="domain" description="KARI C-terminal knotted" evidence="3">
    <location>
        <begin position="182"/>
        <end position="327"/>
    </location>
</feature>
<feature type="active site" evidence="1">
    <location>
        <position position="107"/>
    </location>
</feature>
<feature type="binding site" evidence="1">
    <location>
        <begin position="25"/>
        <end position="28"/>
    </location>
    <ligand>
        <name>NADP(+)</name>
        <dbReference type="ChEBI" id="CHEBI:58349"/>
    </ligand>
</feature>
<feature type="binding site" evidence="1">
    <location>
        <position position="48"/>
    </location>
    <ligand>
        <name>NADP(+)</name>
        <dbReference type="ChEBI" id="CHEBI:58349"/>
    </ligand>
</feature>
<feature type="binding site" evidence="1">
    <location>
        <position position="52"/>
    </location>
    <ligand>
        <name>NADP(+)</name>
        <dbReference type="ChEBI" id="CHEBI:58349"/>
    </ligand>
</feature>
<feature type="binding site" evidence="1">
    <location>
        <begin position="82"/>
        <end position="85"/>
    </location>
    <ligand>
        <name>NADP(+)</name>
        <dbReference type="ChEBI" id="CHEBI:58349"/>
    </ligand>
</feature>
<feature type="binding site" evidence="1">
    <location>
        <position position="133"/>
    </location>
    <ligand>
        <name>NADP(+)</name>
        <dbReference type="ChEBI" id="CHEBI:58349"/>
    </ligand>
</feature>
<feature type="binding site" evidence="1">
    <location>
        <position position="190"/>
    </location>
    <ligand>
        <name>Mg(2+)</name>
        <dbReference type="ChEBI" id="CHEBI:18420"/>
        <label>1</label>
    </ligand>
</feature>
<feature type="binding site" evidence="1">
    <location>
        <position position="190"/>
    </location>
    <ligand>
        <name>Mg(2+)</name>
        <dbReference type="ChEBI" id="CHEBI:18420"/>
        <label>2</label>
    </ligand>
</feature>
<feature type="binding site" evidence="1">
    <location>
        <position position="194"/>
    </location>
    <ligand>
        <name>Mg(2+)</name>
        <dbReference type="ChEBI" id="CHEBI:18420"/>
        <label>1</label>
    </ligand>
</feature>
<feature type="binding site" evidence="1">
    <location>
        <position position="226"/>
    </location>
    <ligand>
        <name>Mg(2+)</name>
        <dbReference type="ChEBI" id="CHEBI:18420"/>
        <label>2</label>
    </ligand>
</feature>
<feature type="binding site" evidence="1">
    <location>
        <position position="230"/>
    </location>
    <ligand>
        <name>Mg(2+)</name>
        <dbReference type="ChEBI" id="CHEBI:18420"/>
        <label>2</label>
    </ligand>
</feature>
<feature type="binding site" evidence="1">
    <location>
        <position position="251"/>
    </location>
    <ligand>
        <name>substrate</name>
    </ligand>
</feature>
<accession>Q4L7T9</accession>